<protein>
    <recommendedName>
        <fullName evidence="1">Alanine--tRNA ligase</fullName>
        <ecNumber evidence="1">6.1.1.7</ecNumber>
    </recommendedName>
    <alternativeName>
        <fullName evidence="1">Alanyl-tRNA synthetase</fullName>
        <shortName evidence="1">AlaRS</shortName>
    </alternativeName>
</protein>
<evidence type="ECO:0000255" key="1">
    <source>
        <dbReference type="HAMAP-Rule" id="MF_00036"/>
    </source>
</evidence>
<keyword id="KW-0030">Aminoacyl-tRNA synthetase</keyword>
<keyword id="KW-0067">ATP-binding</keyword>
<keyword id="KW-0963">Cytoplasm</keyword>
<keyword id="KW-0436">Ligase</keyword>
<keyword id="KW-0479">Metal-binding</keyword>
<keyword id="KW-0547">Nucleotide-binding</keyword>
<keyword id="KW-0648">Protein biosynthesis</keyword>
<keyword id="KW-0694">RNA-binding</keyword>
<keyword id="KW-0820">tRNA-binding</keyword>
<keyword id="KW-0862">Zinc</keyword>
<accession>B1YDH4</accession>
<sequence length="892" mass="99923">MLSAKILQSSGFHRKQCPLCKSYFWTRRADQIYCGDQPCVPYGFIGNPPARASVESLADLRERFLRFFERNSHVRIRRYPVVARWRDDVYLVGASIYDFQPWVTSGAVPPPANPLAISQPSIRLTDVDKVGRSGRHLTGFEMMAHHAFNYPDKYVYWIDETTQYAYEFFTRELGIPPDEITFKESMWEGGGNAGECFEVLIRGLEVATLVFMHYEVKDGRYVELPLKIVDTGYGLERIYWLLKGTPTVYDAVFGPYLAKARQRLGVPEPPAEVMGKASVYFGQMDPEVIGLEKAYDIIAEKIGVDPKWLREVVRPQEALYVLADHSRTVSWMIADGVIPSNTGAGYLARLLIRRILKNLRLAGVDAPLVELFDMHLAELKREYPEVWEARGLILELVDMEERRYREVLKSAPAAVKKALEEARRRGRAGLDADDLVALYDSQGIPPEVAAEVAKSLGTEVKVPDDFYAKLAARHVKREKKPESSPVEMGKVADLPRTRELFYEDSYMRSFKARVLRVIDGRYVVLDQTAFYPEGGGQPADRGVLKFQGGEAKVVDVQRVGHVVVHVVEGQPPPEGAEVVGEVDWERRYSLMKMHTGTHVLIQSIRRVLGSHIWQAGAQKDIPSSRIDVTHHRLPTAEEVARIEELANRAVQADLPVYAKIMPRNEAEAKYGFVLYQGGVVPAREIRVLQIGPDEQPYDVQACGGTHLRSTGEIGLIKIQKVERIADGVVRFVFTTGMHALAYVQELERRAAEAASIAGGSRDELVEAVRRLAQRAEEADRRARRYAELYAAALAENLKAEQVGRHRLAVVELDDEELARKIALAATSRDRDLVLVFVGGGRATVYTGGVDVAPIVKALREVGFRGGGSKTFAQGQYKGDIQTLKEAIRRALA</sequence>
<proteinExistence type="inferred from homology"/>
<dbReference type="EC" id="6.1.1.7" evidence="1"/>
<dbReference type="EMBL" id="CP001014">
    <property type="protein sequence ID" value="ACB39837.1"/>
    <property type="molecule type" value="Genomic_DNA"/>
</dbReference>
<dbReference type="RefSeq" id="WP_012350257.1">
    <property type="nucleotide sequence ID" value="NC_010525.1"/>
</dbReference>
<dbReference type="SMR" id="B1YDH4"/>
<dbReference type="STRING" id="444157.Tneu_0900"/>
<dbReference type="GeneID" id="6164315"/>
<dbReference type="KEGG" id="tne:Tneu_0900"/>
<dbReference type="eggNOG" id="arCOG01255">
    <property type="taxonomic scope" value="Archaea"/>
</dbReference>
<dbReference type="HOGENOM" id="CLU_004485_4_0_2"/>
<dbReference type="OrthoDB" id="7506at2157"/>
<dbReference type="Proteomes" id="UP000001694">
    <property type="component" value="Chromosome"/>
</dbReference>
<dbReference type="GO" id="GO:0005737">
    <property type="term" value="C:cytoplasm"/>
    <property type="evidence" value="ECO:0007669"/>
    <property type="project" value="UniProtKB-SubCell"/>
</dbReference>
<dbReference type="GO" id="GO:0004813">
    <property type="term" value="F:alanine-tRNA ligase activity"/>
    <property type="evidence" value="ECO:0007669"/>
    <property type="project" value="UniProtKB-UniRule"/>
</dbReference>
<dbReference type="GO" id="GO:0002161">
    <property type="term" value="F:aminoacyl-tRNA deacylase activity"/>
    <property type="evidence" value="ECO:0007669"/>
    <property type="project" value="UniProtKB-ARBA"/>
</dbReference>
<dbReference type="GO" id="GO:0005524">
    <property type="term" value="F:ATP binding"/>
    <property type="evidence" value="ECO:0007669"/>
    <property type="project" value="UniProtKB-UniRule"/>
</dbReference>
<dbReference type="GO" id="GO:0000049">
    <property type="term" value="F:tRNA binding"/>
    <property type="evidence" value="ECO:0007669"/>
    <property type="project" value="UniProtKB-KW"/>
</dbReference>
<dbReference type="GO" id="GO:0008270">
    <property type="term" value="F:zinc ion binding"/>
    <property type="evidence" value="ECO:0007669"/>
    <property type="project" value="UniProtKB-UniRule"/>
</dbReference>
<dbReference type="GO" id="GO:0006419">
    <property type="term" value="P:alanyl-tRNA aminoacylation"/>
    <property type="evidence" value="ECO:0007669"/>
    <property type="project" value="UniProtKB-UniRule"/>
</dbReference>
<dbReference type="CDD" id="cd00673">
    <property type="entry name" value="AlaRS_core"/>
    <property type="match status" value="1"/>
</dbReference>
<dbReference type="FunFam" id="2.40.30.130:FF:000010">
    <property type="entry name" value="Alanine--tRNA ligase"/>
    <property type="match status" value="1"/>
</dbReference>
<dbReference type="FunFam" id="3.30.54.20:FF:000005">
    <property type="entry name" value="Alanine--tRNA ligase"/>
    <property type="match status" value="1"/>
</dbReference>
<dbReference type="FunFam" id="3.30.930.10:FF:000056">
    <property type="entry name" value="Alanine--tRNA ligase"/>
    <property type="match status" value="1"/>
</dbReference>
<dbReference type="FunFam" id="3.30.980.10:FF:000004">
    <property type="entry name" value="Alanine--tRNA ligase, cytoplasmic"/>
    <property type="match status" value="1"/>
</dbReference>
<dbReference type="Gene3D" id="2.40.30.130">
    <property type="match status" value="1"/>
</dbReference>
<dbReference type="Gene3D" id="3.30.930.10">
    <property type="entry name" value="Bira Bifunctional Protein, Domain 2"/>
    <property type="match status" value="1"/>
</dbReference>
<dbReference type="Gene3D" id="3.30.980.10">
    <property type="entry name" value="Threonyl-trna Synthetase, Chain A, domain 2"/>
    <property type="match status" value="1"/>
</dbReference>
<dbReference type="HAMAP" id="MF_00036_A">
    <property type="entry name" value="Ala_tRNA_synth_A"/>
    <property type="match status" value="1"/>
</dbReference>
<dbReference type="InterPro" id="IPR045864">
    <property type="entry name" value="aa-tRNA-synth_II/BPL/LPL"/>
</dbReference>
<dbReference type="InterPro" id="IPR002318">
    <property type="entry name" value="Ala-tRNA-lgiase_IIc"/>
</dbReference>
<dbReference type="InterPro" id="IPR018162">
    <property type="entry name" value="Ala-tRNA-ligase_IIc_anticod-bd"/>
</dbReference>
<dbReference type="InterPro" id="IPR018165">
    <property type="entry name" value="Ala-tRNA-synth_IIc_core"/>
</dbReference>
<dbReference type="InterPro" id="IPR018164">
    <property type="entry name" value="Ala-tRNA-synth_IIc_N"/>
</dbReference>
<dbReference type="InterPro" id="IPR022429">
    <property type="entry name" value="Ala-tRNA_lgiase_arc"/>
</dbReference>
<dbReference type="InterPro" id="IPR050058">
    <property type="entry name" value="Ala-tRNA_ligase"/>
</dbReference>
<dbReference type="InterPro" id="IPR018163">
    <property type="entry name" value="Thr/Ala-tRNA-synth_IIc_edit"/>
</dbReference>
<dbReference type="InterPro" id="IPR009000">
    <property type="entry name" value="Transl_B-barrel_sf"/>
</dbReference>
<dbReference type="InterPro" id="IPR012947">
    <property type="entry name" value="tRNA_SAD"/>
</dbReference>
<dbReference type="NCBIfam" id="TIGR03683">
    <property type="entry name" value="A-tRNA_syn_arch"/>
    <property type="match status" value="1"/>
</dbReference>
<dbReference type="NCBIfam" id="TIGR00344">
    <property type="entry name" value="alaS"/>
    <property type="match status" value="1"/>
</dbReference>
<dbReference type="PANTHER" id="PTHR11777:SF9">
    <property type="entry name" value="ALANINE--TRNA LIGASE, CYTOPLASMIC"/>
    <property type="match status" value="1"/>
</dbReference>
<dbReference type="PANTHER" id="PTHR11777">
    <property type="entry name" value="ALANYL-TRNA SYNTHETASE"/>
    <property type="match status" value="1"/>
</dbReference>
<dbReference type="Pfam" id="PF01411">
    <property type="entry name" value="tRNA-synt_2c"/>
    <property type="match status" value="1"/>
</dbReference>
<dbReference type="Pfam" id="PF07973">
    <property type="entry name" value="tRNA_SAD"/>
    <property type="match status" value="1"/>
</dbReference>
<dbReference type="PRINTS" id="PR00980">
    <property type="entry name" value="TRNASYNTHALA"/>
</dbReference>
<dbReference type="SMART" id="SM00863">
    <property type="entry name" value="tRNA_SAD"/>
    <property type="match status" value="1"/>
</dbReference>
<dbReference type="SUPFAM" id="SSF55681">
    <property type="entry name" value="Class II aaRS and biotin synthetases"/>
    <property type="match status" value="1"/>
</dbReference>
<dbReference type="SUPFAM" id="SSF101353">
    <property type="entry name" value="Putative anticodon-binding domain of alanyl-tRNA synthetase (AlaRS)"/>
    <property type="match status" value="1"/>
</dbReference>
<dbReference type="SUPFAM" id="SSF55186">
    <property type="entry name" value="ThrRS/AlaRS common domain"/>
    <property type="match status" value="1"/>
</dbReference>
<dbReference type="SUPFAM" id="SSF50447">
    <property type="entry name" value="Translation proteins"/>
    <property type="match status" value="1"/>
</dbReference>
<dbReference type="PROSITE" id="PS50860">
    <property type="entry name" value="AA_TRNA_LIGASE_II_ALA"/>
    <property type="match status" value="1"/>
</dbReference>
<name>SYA_PYRNV</name>
<feature type="chain" id="PRO_0000347893" description="Alanine--tRNA ligase">
    <location>
        <begin position="1"/>
        <end position="892"/>
    </location>
</feature>
<feature type="binding site" evidence="1">
    <location>
        <position position="594"/>
    </location>
    <ligand>
        <name>Zn(2+)</name>
        <dbReference type="ChEBI" id="CHEBI:29105"/>
    </ligand>
</feature>
<feature type="binding site" evidence="1">
    <location>
        <position position="598"/>
    </location>
    <ligand>
        <name>Zn(2+)</name>
        <dbReference type="ChEBI" id="CHEBI:29105"/>
    </ligand>
</feature>
<feature type="binding site" evidence="1">
    <location>
        <position position="702"/>
    </location>
    <ligand>
        <name>Zn(2+)</name>
        <dbReference type="ChEBI" id="CHEBI:29105"/>
    </ligand>
</feature>
<feature type="binding site" evidence="1">
    <location>
        <position position="706"/>
    </location>
    <ligand>
        <name>Zn(2+)</name>
        <dbReference type="ChEBI" id="CHEBI:29105"/>
    </ligand>
</feature>
<reference key="1">
    <citation type="submission" date="2008-03" db="EMBL/GenBank/DDBJ databases">
        <title>Complete sequence of Thermoproteus neutrophilus V24Sta.</title>
        <authorList>
            <consortium name="US DOE Joint Genome Institute"/>
            <person name="Copeland A."/>
            <person name="Lucas S."/>
            <person name="Lapidus A."/>
            <person name="Glavina del Rio T."/>
            <person name="Dalin E."/>
            <person name="Tice H."/>
            <person name="Bruce D."/>
            <person name="Goodwin L."/>
            <person name="Pitluck S."/>
            <person name="Sims D."/>
            <person name="Brettin T."/>
            <person name="Detter J.C."/>
            <person name="Han C."/>
            <person name="Kuske C.R."/>
            <person name="Schmutz J."/>
            <person name="Larimer F."/>
            <person name="Land M."/>
            <person name="Hauser L."/>
            <person name="Kyrpides N."/>
            <person name="Mikhailova N."/>
            <person name="Biddle J.F."/>
            <person name="Zhang Z."/>
            <person name="Fitz-Gibbon S.T."/>
            <person name="Lowe T.M."/>
            <person name="Saltikov C."/>
            <person name="House C.H."/>
            <person name="Richardson P."/>
        </authorList>
    </citation>
    <scope>NUCLEOTIDE SEQUENCE [LARGE SCALE GENOMIC DNA]</scope>
    <source>
        <strain>DSM 2338 / JCM 9278 / NBRC 100436 / V24Sta</strain>
    </source>
</reference>
<gene>
    <name evidence="1" type="primary">alaS</name>
    <name type="ordered locus">Tneu_0900</name>
</gene>
<organism>
    <name type="scientific">Pyrobaculum neutrophilum (strain DSM 2338 / JCM 9278 / NBRC 100436 / V24Sta)</name>
    <name type="common">Thermoproteus neutrophilus</name>
    <dbReference type="NCBI Taxonomy" id="444157"/>
    <lineage>
        <taxon>Archaea</taxon>
        <taxon>Thermoproteota</taxon>
        <taxon>Thermoprotei</taxon>
        <taxon>Thermoproteales</taxon>
        <taxon>Thermoproteaceae</taxon>
        <taxon>Pyrobaculum</taxon>
    </lineage>
</organism>
<comment type="function">
    <text evidence="1">Catalyzes the attachment of alanine to tRNA(Ala) in a two-step reaction: alanine is first activated by ATP to form Ala-AMP and then transferred to the acceptor end of tRNA(Ala). Also edits incorrectly charged Ser-tRNA(Ala) and Gly-tRNA(Ala) via its editing domain.</text>
</comment>
<comment type="catalytic activity">
    <reaction evidence="1">
        <text>tRNA(Ala) + L-alanine + ATP = L-alanyl-tRNA(Ala) + AMP + diphosphate</text>
        <dbReference type="Rhea" id="RHEA:12540"/>
        <dbReference type="Rhea" id="RHEA-COMP:9657"/>
        <dbReference type="Rhea" id="RHEA-COMP:9923"/>
        <dbReference type="ChEBI" id="CHEBI:30616"/>
        <dbReference type="ChEBI" id="CHEBI:33019"/>
        <dbReference type="ChEBI" id="CHEBI:57972"/>
        <dbReference type="ChEBI" id="CHEBI:78442"/>
        <dbReference type="ChEBI" id="CHEBI:78497"/>
        <dbReference type="ChEBI" id="CHEBI:456215"/>
        <dbReference type="EC" id="6.1.1.7"/>
    </reaction>
</comment>
<comment type="cofactor">
    <cofactor evidence="1">
        <name>Zn(2+)</name>
        <dbReference type="ChEBI" id="CHEBI:29105"/>
    </cofactor>
    <text evidence="1">Binds 1 zinc ion per subunit.</text>
</comment>
<comment type="subcellular location">
    <subcellularLocation>
        <location evidence="1">Cytoplasm</location>
    </subcellularLocation>
</comment>
<comment type="domain">
    <text evidence="1">Consists of three domains; the N-terminal catalytic domain, the editing domain and the C-terminal C-Ala domain. The editing domain removes incorrectly charged amino acids, while the C-Ala domain, along with tRNA(Ala), serves as a bridge to cooperatively bring together the editing and aminoacylation centers thus stimulating deacylation of misacylated tRNAs.</text>
</comment>
<comment type="similarity">
    <text evidence="1">Belongs to the class-II aminoacyl-tRNA synthetase family.</text>
</comment>